<keyword id="KW-0131">Cell cycle</keyword>
<keyword id="KW-0132">Cell division</keyword>
<keyword id="KW-0137">Centromere</keyword>
<keyword id="KW-0158">Chromosome</keyword>
<keyword id="KW-0159">Chromosome partition</keyword>
<keyword id="KW-0903">Direct protein sequencing</keyword>
<keyword id="KW-0498">Mitosis</keyword>
<keyword id="KW-0539">Nucleus</keyword>
<keyword id="KW-0597">Phosphoprotein</keyword>
<keyword id="KW-1185">Reference proteome</keyword>
<name>STAG1_XENLA</name>
<gene>
    <name type="primary">stag1</name>
    <name type="synonym">sa1</name>
</gene>
<evidence type="ECO:0000250" key="1"/>
<evidence type="ECO:0000255" key="2">
    <source>
        <dbReference type="PROSITE-ProRule" id="PRU00750"/>
    </source>
</evidence>
<evidence type="ECO:0000256" key="3">
    <source>
        <dbReference type="SAM" id="MobiDB-lite"/>
    </source>
</evidence>
<evidence type="ECO:0000269" key="4">
    <source>
    </source>
</evidence>
<evidence type="ECO:0000305" key="5"/>
<organism>
    <name type="scientific">Xenopus laevis</name>
    <name type="common">African clawed frog</name>
    <dbReference type="NCBI Taxonomy" id="8355"/>
    <lineage>
        <taxon>Eukaryota</taxon>
        <taxon>Metazoa</taxon>
        <taxon>Chordata</taxon>
        <taxon>Craniata</taxon>
        <taxon>Vertebrata</taxon>
        <taxon>Euteleostomi</taxon>
        <taxon>Amphibia</taxon>
        <taxon>Batrachia</taxon>
        <taxon>Anura</taxon>
        <taxon>Pipoidea</taxon>
        <taxon>Pipidae</taxon>
        <taxon>Xenopodinae</taxon>
        <taxon>Xenopus</taxon>
        <taxon>Xenopus</taxon>
    </lineage>
</organism>
<dbReference type="EMBL" id="AF255017">
    <property type="protein sequence ID" value="AAG00430.1"/>
    <property type="molecule type" value="mRNA"/>
</dbReference>
<dbReference type="EMBL" id="BC068770">
    <property type="protein sequence ID" value="AAH68770.1"/>
    <property type="molecule type" value="mRNA"/>
</dbReference>
<dbReference type="RefSeq" id="NP_001083864.1">
    <property type="nucleotide sequence ID" value="NM_001090395.1"/>
</dbReference>
<dbReference type="SMR" id="Q9DGN1"/>
<dbReference type="BioGRID" id="100488">
    <property type="interactions" value="1"/>
</dbReference>
<dbReference type="IntAct" id="Q9DGN1">
    <property type="interactions" value="8"/>
</dbReference>
<dbReference type="DNASU" id="399163"/>
<dbReference type="GeneID" id="399163"/>
<dbReference type="KEGG" id="xla:399163"/>
<dbReference type="AGR" id="Xenbase:XB-GENE-1006159"/>
<dbReference type="CTD" id="399163"/>
<dbReference type="Xenbase" id="XB-GENE-1006159">
    <property type="gene designation" value="stag1.S"/>
</dbReference>
<dbReference type="OrthoDB" id="498590at2759"/>
<dbReference type="Proteomes" id="UP000186698">
    <property type="component" value="Chromosome 5S"/>
</dbReference>
<dbReference type="Bgee" id="399163">
    <property type="expression patterns" value="Expressed in egg cell and 19 other cell types or tissues"/>
</dbReference>
<dbReference type="GO" id="GO:0000785">
    <property type="term" value="C:chromatin"/>
    <property type="evidence" value="ECO:0000318"/>
    <property type="project" value="GO_Central"/>
</dbReference>
<dbReference type="GO" id="GO:0000775">
    <property type="term" value="C:chromosome, centromeric region"/>
    <property type="evidence" value="ECO:0007669"/>
    <property type="project" value="UniProtKB-SubCell"/>
</dbReference>
<dbReference type="GO" id="GO:0008278">
    <property type="term" value="C:cohesin complex"/>
    <property type="evidence" value="ECO:0000318"/>
    <property type="project" value="GO_Central"/>
</dbReference>
<dbReference type="GO" id="GO:0005634">
    <property type="term" value="C:nucleus"/>
    <property type="evidence" value="ECO:0000318"/>
    <property type="project" value="GO_Central"/>
</dbReference>
<dbReference type="GO" id="GO:0003682">
    <property type="term" value="F:chromatin binding"/>
    <property type="evidence" value="ECO:0000318"/>
    <property type="project" value="GO_Central"/>
</dbReference>
<dbReference type="GO" id="GO:0046982">
    <property type="term" value="F:protein heterodimerization activity"/>
    <property type="evidence" value="ECO:0000353"/>
    <property type="project" value="UniProtKB"/>
</dbReference>
<dbReference type="GO" id="GO:0051301">
    <property type="term" value="P:cell division"/>
    <property type="evidence" value="ECO:0007669"/>
    <property type="project" value="UniProtKB-KW"/>
</dbReference>
<dbReference type="GO" id="GO:0007059">
    <property type="term" value="P:chromosome segregation"/>
    <property type="evidence" value="ECO:0007669"/>
    <property type="project" value="UniProtKB-KW"/>
</dbReference>
<dbReference type="GO" id="GO:0007062">
    <property type="term" value="P:sister chromatid cohesion"/>
    <property type="evidence" value="ECO:0000318"/>
    <property type="project" value="GO_Central"/>
</dbReference>
<dbReference type="InterPro" id="IPR016024">
    <property type="entry name" value="ARM-type_fold"/>
</dbReference>
<dbReference type="InterPro" id="IPR039662">
    <property type="entry name" value="Cohesin_Scc3/SA"/>
</dbReference>
<dbReference type="InterPro" id="IPR056396">
    <property type="entry name" value="HEAT_SCC3-SA"/>
</dbReference>
<dbReference type="InterPro" id="IPR020839">
    <property type="entry name" value="SCD"/>
</dbReference>
<dbReference type="InterPro" id="IPR013721">
    <property type="entry name" value="STAG"/>
</dbReference>
<dbReference type="PANTHER" id="PTHR11199:SF6">
    <property type="entry name" value="COHESIN SUBUNIT SA-1"/>
    <property type="match status" value="1"/>
</dbReference>
<dbReference type="PANTHER" id="PTHR11199">
    <property type="entry name" value="STROMAL ANTIGEN"/>
    <property type="match status" value="1"/>
</dbReference>
<dbReference type="Pfam" id="PF24571">
    <property type="entry name" value="HEAT_SCC3-SA"/>
    <property type="match status" value="1"/>
</dbReference>
<dbReference type="Pfam" id="PF21581">
    <property type="entry name" value="SCD"/>
    <property type="match status" value="1"/>
</dbReference>
<dbReference type="Pfam" id="PF08514">
    <property type="entry name" value="STAG"/>
    <property type="match status" value="1"/>
</dbReference>
<dbReference type="SUPFAM" id="SSF48371">
    <property type="entry name" value="ARM repeat"/>
    <property type="match status" value="1"/>
</dbReference>
<dbReference type="PROSITE" id="PS51425">
    <property type="entry name" value="SCD"/>
    <property type="match status" value="1"/>
</dbReference>
<reference key="1">
    <citation type="journal article" date="2000" name="J. Cell Biol.">
        <title>Identification and characterization of SA/Scc3p subunits in the Xenopus and human cohesin complexes.</title>
        <authorList>
            <person name="Losada A."/>
            <person name="Yokochi T."/>
            <person name="Kobayashi R."/>
            <person name="Hirano T."/>
        </authorList>
    </citation>
    <scope>NUCLEOTIDE SEQUENCE [MRNA]</scope>
    <scope>PROTEIN SEQUENCE OF 328-340; 451-459 AND 620-625</scope>
    <scope>SUBUNIT OF A COMPLEX COMPOSED OF SMC1; SMC3 AND RAD21</scope>
    <scope>PHOSPHORYLATION</scope>
    <source>
        <tissue>Egg</tissue>
    </source>
</reference>
<reference key="2">
    <citation type="submission" date="2004-04" db="EMBL/GenBank/DDBJ databases">
        <authorList>
            <consortium name="NIH - Xenopus Gene Collection (XGC) project"/>
        </authorList>
    </citation>
    <scope>NUCLEOTIDE SEQUENCE [LARGE SCALE MRNA]</scope>
    <source>
        <tissue>Embryo</tissue>
    </source>
</reference>
<reference key="3">
    <citation type="journal article" date="2002" name="Mol. Cell">
        <title>The dissociation of cohesin from chromosomes in prophase is regulated by Polo-like kinase.</title>
        <authorList>
            <person name="Sumara I."/>
            <person name="Vorlaufer E."/>
            <person name="Stukenberg P.T."/>
            <person name="Kelm O."/>
            <person name="Redemann N."/>
            <person name="Nigg E.A."/>
            <person name="Peters J.-M."/>
        </authorList>
    </citation>
    <scope>PHOSPHORYLATION BY PLK1</scope>
</reference>
<protein>
    <recommendedName>
        <fullName>Cohesin subunit SA-1</fullName>
        <shortName>xSA-1</shortName>
    </recommendedName>
    <alternativeName>
        <fullName>SCC3 homolog 1</fullName>
    </alternativeName>
    <alternativeName>
        <fullName>Stromal antigen 1 homolog</fullName>
    </alternativeName>
</protein>
<feature type="chain" id="PRO_0000120184" description="Cohesin subunit SA-1">
    <location>
        <begin position="1"/>
        <end position="1265"/>
    </location>
</feature>
<feature type="domain" description="SCD" evidence="2">
    <location>
        <begin position="303"/>
        <end position="388"/>
    </location>
</feature>
<feature type="region of interest" description="Disordered" evidence="3">
    <location>
        <begin position="1"/>
        <end position="21"/>
    </location>
</feature>
<feature type="region of interest" description="Disordered" evidence="3">
    <location>
        <begin position="37"/>
        <end position="91"/>
    </location>
</feature>
<feature type="region of interest" description="Disordered" evidence="3">
    <location>
        <begin position="1063"/>
        <end position="1097"/>
    </location>
</feature>
<feature type="region of interest" description="Disordered" evidence="3">
    <location>
        <begin position="1111"/>
        <end position="1130"/>
    </location>
</feature>
<feature type="compositionally biased region" description="Polar residues" evidence="3">
    <location>
        <begin position="1"/>
        <end position="16"/>
    </location>
</feature>
<feature type="compositionally biased region" description="Basic and acidic residues" evidence="3">
    <location>
        <begin position="62"/>
        <end position="73"/>
    </location>
</feature>
<feature type="compositionally biased region" description="Low complexity" evidence="3">
    <location>
        <begin position="1069"/>
        <end position="1082"/>
    </location>
</feature>
<feature type="compositionally biased region" description="Basic residues" evidence="3">
    <location>
        <begin position="1083"/>
        <end position="1095"/>
    </location>
</feature>
<feature type="compositionally biased region" description="Polar residues" evidence="3">
    <location>
        <begin position="1111"/>
        <end position="1129"/>
    </location>
</feature>
<proteinExistence type="evidence at protein level"/>
<sequence length="1265" mass="145244">MITSELSVLQDSTNESAVMHTDMTAVSADLSTELVEDLEVKGKRKRGRPGRPPSAIKKPRKTPGDRSRAEPGSRGRGRANGHPQQNGEGDPVTLFEVVKMGKSAMQAVVDDWIESYKQDRDIALLDLINFFIQCSGCKGTVRIEMFRNMQNAEIIRKMTEEFDEDSGDYPLTMPGPHWKKFRCNFCEFISVLIRQCQYSIIYDEYMMDTVISLLTGLSDSQVRAFRHTSTLAAMKLMTALVNVALNLSIHQDNTQRQYETERNKIINKRANERLELLLQKRKELQENQDEIENMMNSIFKGIFVHRYRDAIAEIRAICIEEIGVWMKMYSDAFLNDSYLKYVGWTLHDRQGEVRLKCLKALQSLYTNRELFPKLELFTNRFKDRIVSMTLDKEYDVAVEAIRLVTLILHGSEEALSNEDCENVYHLVYSAHRPVAVAAGEFLHKKLFSRHDPQAEEALAKRRGRSSPNGNLVKMLVLFFLESELHEHAAYLVDSLWESSQELLKDWECMTELLVEEPMQGEEVMSERQESALVELMVCTIRQAAEAHPPVGRGTGKRVLTAKERKTQLDDKTKLTEHFIVALPVLLSKYSADAEKVANLLQIPQYFDLELYSTGRMEKHLDSLLKQIRFVVEKHIESDVLEACSKTYSILCSEEYTIQNRVEIAHSQLIDELADRFSHAVEELLQEAEEADEDEIYNVMASLKRLTCFHNAHDLTKWDFFGNCYRLLRAGIEHEGMMEQIVVQALQCSHYSILWQLVKITEGNPSKEEMLALRKTVKSFLAVCQQCLSSMTTLVKEQAFMLLCDLLMIFSHQLTTGGRENLLLLVFNPDVGLQSELLSFVMDHVFIDQDDENQSMEGDEEDEANKIEALHKRRNLLASFCKLIIYDIVDMNAAADIFKHYMKYYNDYGDIIKETLSKTRQMDKIQCAKTLILSLQQLFNELVQEQGPNLDRTSAHVSGIKELARRFALTFGLDQIKTREAVATLHKDGIEFAFKYQNPKGPEYPPLNLAFLEVLSEFSSKLLRQDKKTVHSYLEKFLTDLMMERREDVWLPLISYRNSLVTGGDEDRLSVNSGGSNSKGSSVRSKKGRPPLHKKRVIEEESIDNSWVTRNDTIQTPGALTTPQLTSTVLRENPRQIPEQIPEQESEPSSEPDFLHSPQMQMSWLGQQKLEDLNRKDRTSMSYMKVRSGVRHAVRGLMEDDAEPIFEDVMMSSRGQLEDMNEEFEDTMVIDLPPSRNRRERAELRPDFFDSAAIIEDDSGFGMPMF</sequence>
<comment type="function">
    <text>Component of cohesin complex, a complex required for the cohesion of sister chromatids after DNA replication. The cohesin complex apparently forms a large proteinaceous ring within which sister chromatids can be trapped. At anaphase, the complex is cleaved and dissociates from chromatin, allowing sister chromatids to segregate. The cohesin complex may also play a role in spindle pole assembly during mitosis.</text>
</comment>
<comment type="subunit">
    <text evidence="4">Interacts directly with RAD21 in cohesin complex. Cohesin complexes are composed of a heterodimer between and SMC3, which are attached via their hinge domain, and RAD21 which link them at their heads, and one STAG protein (STAG1 OR STAG2). In cohesin complexes, STAG1 is mutually exclusive with STAG2.</text>
</comment>
<comment type="interaction">
    <interactant intactId="EBI-80622">
        <id>Q9DGN1</id>
    </interactant>
    <interactant intactId="EBI-80653">
        <id>O93309</id>
        <label>smc3</label>
    </interactant>
    <organismsDiffer>false</organismsDiffer>
    <experiments>2</experiments>
</comment>
<comment type="subcellular location">
    <subcellularLocation>
        <location>Nucleus</location>
    </subcellularLocation>
    <subcellularLocation>
        <location>Chromosome</location>
    </subcellularLocation>
    <subcellularLocation>
        <location>Chromosome</location>
        <location>Centromere</location>
    </subcellularLocation>
    <text>Associates with chromatin. Before prophase it is scattered along chromosome arms. During prophase, most of cohesin complexes dissociate from chromatin probably because of phosphorylation by PLK1, except at centromeres, where cohesin complexes remain. At anaphase, the RAD21 subunit of cohesin is cleaved, leading to the dissociation of the complex from chromosomes, allowing chromosome separation.</text>
</comment>
<comment type="PTM">
    <text evidence="1">Phosphorylated by PLK1. The large dissociation of cohesin from chromosome arms during prophase is partly due to its phosphorylation (By similarity).</text>
</comment>
<comment type="similarity">
    <text evidence="5">Belongs to the SCC3 family.</text>
</comment>
<accession>Q9DGN1</accession>
<accession>Q5D028</accession>